<evidence type="ECO:0000255" key="1">
    <source>
        <dbReference type="HAMAP-Rule" id="MF_01217"/>
    </source>
</evidence>
<evidence type="ECO:0000255" key="2">
    <source>
        <dbReference type="PROSITE-ProRule" id="PRU00258"/>
    </source>
</evidence>
<name>ACP_SHEDO</name>
<keyword id="KW-0963">Cytoplasm</keyword>
<keyword id="KW-0275">Fatty acid biosynthesis</keyword>
<keyword id="KW-0276">Fatty acid metabolism</keyword>
<keyword id="KW-0444">Lipid biosynthesis</keyword>
<keyword id="KW-0443">Lipid metabolism</keyword>
<keyword id="KW-0596">Phosphopantetheine</keyword>
<keyword id="KW-0597">Phosphoprotein</keyword>
<keyword id="KW-1185">Reference proteome</keyword>
<feature type="chain" id="PRO_1000066688" description="Acyl carrier protein">
    <location>
        <begin position="1"/>
        <end position="77"/>
    </location>
</feature>
<feature type="domain" description="Carrier" evidence="2">
    <location>
        <begin position="2"/>
        <end position="77"/>
    </location>
</feature>
<feature type="modified residue" description="O-(pantetheine 4'-phosphoryl)serine" evidence="2">
    <location>
        <position position="37"/>
    </location>
</feature>
<proteinExistence type="inferred from homology"/>
<reference key="1">
    <citation type="submission" date="2006-03" db="EMBL/GenBank/DDBJ databases">
        <title>Complete sequence of Shewanella denitrificans OS217.</title>
        <authorList>
            <consortium name="US DOE Joint Genome Institute"/>
            <person name="Copeland A."/>
            <person name="Lucas S."/>
            <person name="Lapidus A."/>
            <person name="Barry K."/>
            <person name="Detter J.C."/>
            <person name="Glavina del Rio T."/>
            <person name="Hammon N."/>
            <person name="Israni S."/>
            <person name="Dalin E."/>
            <person name="Tice H."/>
            <person name="Pitluck S."/>
            <person name="Brettin T."/>
            <person name="Bruce D."/>
            <person name="Han C."/>
            <person name="Tapia R."/>
            <person name="Gilna P."/>
            <person name="Kiss H."/>
            <person name="Schmutz J."/>
            <person name="Larimer F."/>
            <person name="Land M."/>
            <person name="Hauser L."/>
            <person name="Kyrpides N."/>
            <person name="Lykidis A."/>
            <person name="Richardson P."/>
        </authorList>
    </citation>
    <scope>NUCLEOTIDE SEQUENCE [LARGE SCALE GENOMIC DNA]</scope>
    <source>
        <strain>OS217 / ATCC BAA-1090 / DSM 15013</strain>
    </source>
</reference>
<protein>
    <recommendedName>
        <fullName evidence="1">Acyl carrier protein</fullName>
        <shortName evidence="1">ACP</shortName>
    </recommendedName>
</protein>
<organism>
    <name type="scientific">Shewanella denitrificans (strain OS217 / ATCC BAA-1090 / DSM 15013)</name>
    <dbReference type="NCBI Taxonomy" id="318161"/>
    <lineage>
        <taxon>Bacteria</taxon>
        <taxon>Pseudomonadati</taxon>
        <taxon>Pseudomonadota</taxon>
        <taxon>Gammaproteobacteria</taxon>
        <taxon>Alteromonadales</taxon>
        <taxon>Shewanellaceae</taxon>
        <taxon>Shewanella</taxon>
    </lineage>
</organism>
<accession>Q12LV4</accession>
<gene>
    <name evidence="1" type="primary">acpP</name>
    <name type="ordered locus">Sden_2292</name>
</gene>
<sequence length="77" mass="8575">MSNIEERVKKIIIEQLGVKEEDVKSAASFVDDLGADSLDTVELVMALEEEFDTEIPDEEAEKITTVQAAIDYVSKNQ</sequence>
<comment type="function">
    <text evidence="1">Carrier of the growing fatty acid chain in fatty acid biosynthesis.</text>
</comment>
<comment type="pathway">
    <text evidence="1">Lipid metabolism; fatty acid biosynthesis.</text>
</comment>
<comment type="subcellular location">
    <subcellularLocation>
        <location evidence="1">Cytoplasm</location>
    </subcellularLocation>
</comment>
<comment type="PTM">
    <text evidence="1">4'-phosphopantetheine is transferred from CoA to a specific serine of apo-ACP by AcpS. This modification is essential for activity because fatty acids are bound in thioester linkage to the sulfhydryl of the prosthetic group.</text>
</comment>
<comment type="similarity">
    <text evidence="1">Belongs to the acyl carrier protein (ACP) family.</text>
</comment>
<dbReference type="EMBL" id="CP000302">
    <property type="protein sequence ID" value="ABE55572.1"/>
    <property type="molecule type" value="Genomic_DNA"/>
</dbReference>
<dbReference type="RefSeq" id="WP_011496723.1">
    <property type="nucleotide sequence ID" value="NC_007954.1"/>
</dbReference>
<dbReference type="SMR" id="Q12LV4"/>
<dbReference type="STRING" id="318161.Sden_2292"/>
<dbReference type="GeneID" id="90568799"/>
<dbReference type="KEGG" id="sdn:Sden_2292"/>
<dbReference type="eggNOG" id="COG0236">
    <property type="taxonomic scope" value="Bacteria"/>
</dbReference>
<dbReference type="HOGENOM" id="CLU_108696_5_1_6"/>
<dbReference type="OrthoDB" id="9804551at2"/>
<dbReference type="UniPathway" id="UPA00094"/>
<dbReference type="Proteomes" id="UP000001982">
    <property type="component" value="Chromosome"/>
</dbReference>
<dbReference type="GO" id="GO:0005829">
    <property type="term" value="C:cytosol"/>
    <property type="evidence" value="ECO:0007669"/>
    <property type="project" value="TreeGrafter"/>
</dbReference>
<dbReference type="GO" id="GO:0016020">
    <property type="term" value="C:membrane"/>
    <property type="evidence" value="ECO:0007669"/>
    <property type="project" value="GOC"/>
</dbReference>
<dbReference type="GO" id="GO:0000035">
    <property type="term" value="F:acyl binding"/>
    <property type="evidence" value="ECO:0007669"/>
    <property type="project" value="TreeGrafter"/>
</dbReference>
<dbReference type="GO" id="GO:0000036">
    <property type="term" value="F:acyl carrier activity"/>
    <property type="evidence" value="ECO:0007669"/>
    <property type="project" value="UniProtKB-UniRule"/>
</dbReference>
<dbReference type="GO" id="GO:0009245">
    <property type="term" value="P:lipid A biosynthetic process"/>
    <property type="evidence" value="ECO:0007669"/>
    <property type="project" value="TreeGrafter"/>
</dbReference>
<dbReference type="FunFam" id="1.10.1200.10:FF:000001">
    <property type="entry name" value="Acyl carrier protein"/>
    <property type="match status" value="1"/>
</dbReference>
<dbReference type="Gene3D" id="1.10.1200.10">
    <property type="entry name" value="ACP-like"/>
    <property type="match status" value="1"/>
</dbReference>
<dbReference type="HAMAP" id="MF_01217">
    <property type="entry name" value="Acyl_carrier"/>
    <property type="match status" value="1"/>
</dbReference>
<dbReference type="InterPro" id="IPR003231">
    <property type="entry name" value="ACP"/>
</dbReference>
<dbReference type="InterPro" id="IPR036736">
    <property type="entry name" value="ACP-like_sf"/>
</dbReference>
<dbReference type="InterPro" id="IPR009081">
    <property type="entry name" value="PP-bd_ACP"/>
</dbReference>
<dbReference type="InterPro" id="IPR006162">
    <property type="entry name" value="Ppantetheine_attach_site"/>
</dbReference>
<dbReference type="NCBIfam" id="TIGR00517">
    <property type="entry name" value="acyl_carrier"/>
    <property type="match status" value="1"/>
</dbReference>
<dbReference type="NCBIfam" id="NF002148">
    <property type="entry name" value="PRK00982.1-2"/>
    <property type="match status" value="1"/>
</dbReference>
<dbReference type="NCBIfam" id="NF002149">
    <property type="entry name" value="PRK00982.1-3"/>
    <property type="match status" value="1"/>
</dbReference>
<dbReference type="NCBIfam" id="NF002150">
    <property type="entry name" value="PRK00982.1-4"/>
    <property type="match status" value="1"/>
</dbReference>
<dbReference type="NCBIfam" id="NF002151">
    <property type="entry name" value="PRK00982.1-5"/>
    <property type="match status" value="1"/>
</dbReference>
<dbReference type="PANTHER" id="PTHR20863">
    <property type="entry name" value="ACYL CARRIER PROTEIN"/>
    <property type="match status" value="1"/>
</dbReference>
<dbReference type="PANTHER" id="PTHR20863:SF76">
    <property type="entry name" value="CARRIER DOMAIN-CONTAINING PROTEIN"/>
    <property type="match status" value="1"/>
</dbReference>
<dbReference type="Pfam" id="PF00550">
    <property type="entry name" value="PP-binding"/>
    <property type="match status" value="1"/>
</dbReference>
<dbReference type="SUPFAM" id="SSF47336">
    <property type="entry name" value="ACP-like"/>
    <property type="match status" value="1"/>
</dbReference>
<dbReference type="PROSITE" id="PS50075">
    <property type="entry name" value="CARRIER"/>
    <property type="match status" value="1"/>
</dbReference>
<dbReference type="PROSITE" id="PS00012">
    <property type="entry name" value="PHOSPHOPANTETHEINE"/>
    <property type="match status" value="1"/>
</dbReference>